<evidence type="ECO:0000250" key="1"/>
<evidence type="ECO:0000255" key="2"/>
<evidence type="ECO:0000255" key="3">
    <source>
        <dbReference type="PROSITE-ProRule" id="PRU00703"/>
    </source>
</evidence>
<evidence type="ECO:0000256" key="4">
    <source>
        <dbReference type="SAM" id="MobiDB-lite"/>
    </source>
</evidence>
<evidence type="ECO:0000269" key="5">
    <source>
    </source>
</evidence>
<evidence type="ECO:0000305" key="6"/>
<dbReference type="EMBL" id="Z71446">
    <property type="protein sequence ID" value="CAA96058.1"/>
    <property type="molecule type" value="mRNA"/>
</dbReference>
<dbReference type="EMBL" id="AP001312">
    <property type="protein sequence ID" value="BAB01934.1"/>
    <property type="molecule type" value="Genomic_DNA"/>
</dbReference>
<dbReference type="EMBL" id="CP002686">
    <property type="protein sequence ID" value="AEE77275.1"/>
    <property type="molecule type" value="Genomic_DNA"/>
</dbReference>
<dbReference type="EMBL" id="AY062518">
    <property type="protein sequence ID" value="AAL32596.1"/>
    <property type="molecule type" value="mRNA"/>
</dbReference>
<dbReference type="RefSeq" id="NP_189353.1">
    <property type="nucleotide sequence ID" value="NM_113631.4"/>
</dbReference>
<dbReference type="SMR" id="P92942"/>
<dbReference type="BioGRID" id="7666">
    <property type="interactions" value="18"/>
</dbReference>
<dbReference type="FunCoup" id="P92942">
    <property type="interactions" value="2437"/>
</dbReference>
<dbReference type="IntAct" id="P92942">
    <property type="interactions" value="14"/>
</dbReference>
<dbReference type="STRING" id="3702.P92942"/>
<dbReference type="iPTMnet" id="P92942"/>
<dbReference type="PaxDb" id="3702-AT3G27170.1"/>
<dbReference type="ProteomicsDB" id="246710"/>
<dbReference type="EnsemblPlants" id="AT3G27170.1">
    <property type="protein sequence ID" value="AT3G27170.1"/>
    <property type="gene ID" value="AT3G27170"/>
</dbReference>
<dbReference type="GeneID" id="822336"/>
<dbReference type="Gramene" id="AT3G27170.1">
    <property type="protein sequence ID" value="AT3G27170.1"/>
    <property type="gene ID" value="AT3G27170"/>
</dbReference>
<dbReference type="KEGG" id="ath:AT3G27170"/>
<dbReference type="Araport" id="AT3G27170"/>
<dbReference type="TAIR" id="AT3G27170">
    <property type="gene designation" value="CLC-B"/>
</dbReference>
<dbReference type="eggNOG" id="KOG0474">
    <property type="taxonomic scope" value="Eukaryota"/>
</dbReference>
<dbReference type="HOGENOM" id="CLU_003181_4_0_1"/>
<dbReference type="InParanoid" id="P92942"/>
<dbReference type="OMA" id="ILTAKWV"/>
<dbReference type="OrthoDB" id="428525at2759"/>
<dbReference type="PhylomeDB" id="P92942"/>
<dbReference type="PRO" id="PR:P92942"/>
<dbReference type="Proteomes" id="UP000006548">
    <property type="component" value="Chromosome 3"/>
</dbReference>
<dbReference type="ExpressionAtlas" id="P92942">
    <property type="expression patterns" value="baseline and differential"/>
</dbReference>
<dbReference type="GO" id="GO:0034707">
    <property type="term" value="C:chloride channel complex"/>
    <property type="evidence" value="ECO:0007669"/>
    <property type="project" value="UniProtKB-KW"/>
</dbReference>
<dbReference type="GO" id="GO:0009705">
    <property type="term" value="C:plant-type vacuole membrane"/>
    <property type="evidence" value="ECO:0000314"/>
    <property type="project" value="TAIR"/>
</dbReference>
<dbReference type="GO" id="GO:0009671">
    <property type="term" value="F:nitrate:proton symporter activity"/>
    <property type="evidence" value="ECO:0000314"/>
    <property type="project" value="TAIR"/>
</dbReference>
<dbReference type="GO" id="GO:0005247">
    <property type="term" value="F:voltage-gated chloride channel activity"/>
    <property type="evidence" value="ECO:0007669"/>
    <property type="project" value="InterPro"/>
</dbReference>
<dbReference type="CDD" id="cd04591">
    <property type="entry name" value="CBS_pair_voltage-gated_CLC_euk_bac"/>
    <property type="match status" value="1"/>
</dbReference>
<dbReference type="CDD" id="cd03685">
    <property type="entry name" value="ClC_6_like"/>
    <property type="match status" value="1"/>
</dbReference>
<dbReference type="FunFam" id="1.10.3080.10:FF:000004">
    <property type="entry name" value="Chloride channel ClC3"/>
    <property type="match status" value="1"/>
</dbReference>
<dbReference type="Gene3D" id="3.10.580.10">
    <property type="entry name" value="CBS-domain"/>
    <property type="match status" value="1"/>
</dbReference>
<dbReference type="Gene3D" id="1.10.3080.10">
    <property type="entry name" value="Clc chloride channel"/>
    <property type="match status" value="1"/>
</dbReference>
<dbReference type="InterPro" id="IPR000644">
    <property type="entry name" value="CBS_dom"/>
</dbReference>
<dbReference type="InterPro" id="IPR046342">
    <property type="entry name" value="CBS_dom_sf"/>
</dbReference>
<dbReference type="InterPro" id="IPR051280">
    <property type="entry name" value="Cl-channel/antiporter"/>
</dbReference>
<dbReference type="InterPro" id="IPR014743">
    <property type="entry name" value="Cl-channel_core"/>
</dbReference>
<dbReference type="InterPro" id="IPR002251">
    <property type="entry name" value="Cl_channel_pln"/>
</dbReference>
<dbReference type="InterPro" id="IPR001807">
    <property type="entry name" value="ClC"/>
</dbReference>
<dbReference type="PANTHER" id="PTHR11689">
    <property type="entry name" value="CHLORIDE CHANNEL PROTEIN CLC FAMILY MEMBER"/>
    <property type="match status" value="1"/>
</dbReference>
<dbReference type="PANTHER" id="PTHR11689:SF155">
    <property type="entry name" value="CHLORIDE CHANNEL PROTEIN CLC-B"/>
    <property type="match status" value="1"/>
</dbReference>
<dbReference type="Pfam" id="PF00571">
    <property type="entry name" value="CBS"/>
    <property type="match status" value="1"/>
</dbReference>
<dbReference type="Pfam" id="PF00654">
    <property type="entry name" value="Voltage_CLC"/>
    <property type="match status" value="1"/>
</dbReference>
<dbReference type="PRINTS" id="PR00762">
    <property type="entry name" value="CLCHANNEL"/>
</dbReference>
<dbReference type="PRINTS" id="PR01120">
    <property type="entry name" value="CLCHANNELPLT"/>
</dbReference>
<dbReference type="SMART" id="SM00116">
    <property type="entry name" value="CBS"/>
    <property type="match status" value="2"/>
</dbReference>
<dbReference type="SUPFAM" id="SSF54631">
    <property type="entry name" value="CBS-domain pair"/>
    <property type="match status" value="1"/>
</dbReference>
<dbReference type="SUPFAM" id="SSF81340">
    <property type="entry name" value="Clc chloride channel"/>
    <property type="match status" value="1"/>
</dbReference>
<dbReference type="PROSITE" id="PS51371">
    <property type="entry name" value="CBS"/>
    <property type="match status" value="2"/>
</dbReference>
<name>CLCB_ARATH</name>
<organism>
    <name type="scientific">Arabidopsis thaliana</name>
    <name type="common">Mouse-ear cress</name>
    <dbReference type="NCBI Taxonomy" id="3702"/>
    <lineage>
        <taxon>Eukaryota</taxon>
        <taxon>Viridiplantae</taxon>
        <taxon>Streptophyta</taxon>
        <taxon>Embryophyta</taxon>
        <taxon>Tracheophyta</taxon>
        <taxon>Spermatophyta</taxon>
        <taxon>Magnoliopsida</taxon>
        <taxon>eudicotyledons</taxon>
        <taxon>Gunneridae</taxon>
        <taxon>Pentapetalae</taxon>
        <taxon>rosids</taxon>
        <taxon>malvids</taxon>
        <taxon>Brassicales</taxon>
        <taxon>Brassicaceae</taxon>
        <taxon>Camelineae</taxon>
        <taxon>Arabidopsis</taxon>
    </lineage>
</organism>
<comment type="function">
    <text>Voltage-gated chloride channel.</text>
</comment>
<comment type="subunit">
    <text evidence="1 5">Homodimer (By similarity). Interacts with PP2A5 (PubMed:27676158).</text>
</comment>
<comment type="subcellular location">
    <subcellularLocation>
        <location>Membrane</location>
        <topology>Multi-pass membrane protein</topology>
    </subcellularLocation>
</comment>
<comment type="tissue specificity">
    <text>Broadly expressed in the plant.</text>
</comment>
<comment type="similarity">
    <text evidence="6">Belongs to the chloride channel (TC 2.A.49) family.</text>
</comment>
<sequence length="780" mass="85458">MVEEDLNQIGGNSNYNGEGGDPESNTLNQPLVKANRTLSSTPLALVGAKVSHIESLDYEINENDLFKHDWRKRSKAQVLQYVFLKWTLACLVGLFTGLIATLINLAVENIAGYKLLAVGHFLTQERYVTGLMVLVGANLGLTLVASVLCVCFAPTAAGPGIPEIKAYLNGVDTPNMFGATTMIVKIVGSIGAVAAGLDLGKEGPLVHIGSCIASLLGQGGTDNHRIKWRWLRYFNNDRDRRDLITCGSAAGVCAAFRSPVGGVLFALEEVATWWRSALLWRTFFSTAVVVVVLREFIEICNSGKCGLFGKGGLIMFDVSHVTYTYHVTDIIPVMLIGVIGGILGSLYNHLLHKVLRLYNLINEKGKIHKVLLSLTVSLFTSVCLYGLPFLAKCKPCDPSIDEICPTNGRSGNFKQFHCPKGYYNDLATLLLTTNDDAVRNLFSSNTPNEFGMGSLWIFFVLYCILGLFTFGIATPSGLFLPIILMGAAYGRMLGAAMGSYTSIDQGLYAVLGAAALMAGSMRMTVSLCVIFLELTNNLLLLPITMIVLLIAKTVGDSFNPSIYDIILHLKGLPFLEANPEPWMRNLTVGELGDAKPPVVTLQGVEKVSNIVDVLKNTTHNAFPVLDEAEVPQVGLATGATELHGLILRAHLVKVLKKRWFLTEKRRTEEWEVREKFPWDELAEREDNFDDVAITSAEMEMYVDLHPLTNTTPYTVMENMSVAKALVLFRQVGLRHLLIVPKIQASGMCPVVGILTRQDLRAYNILQAFPLLEKSKGGKTH</sequence>
<reference key="1">
    <citation type="journal article" date="1996" name="J. Biol. Chem.">
        <title>A family of putative chloride channels from Arabidopsis and functional complementation of a yeast strain with a CLC gene disruption.</title>
        <authorList>
            <person name="Hechenberger M."/>
            <person name="Schwappach B."/>
            <person name="Fischer W.N."/>
            <person name="Frommer W.B."/>
            <person name="Jentsch T.J."/>
            <person name="Steinmeyer K."/>
        </authorList>
    </citation>
    <scope>NUCLEOTIDE SEQUENCE [MRNA]</scope>
    <scope>CHARACTERIZATION</scope>
    <source>
        <strain>cv. Columbia</strain>
    </source>
</reference>
<reference key="2">
    <citation type="journal article" date="2000" name="DNA Res.">
        <title>Structural analysis of Arabidopsis thaliana chromosome 3. II. Sequence features of the 4,251,695 bp regions covered by 90 P1, TAC and BAC clones.</title>
        <authorList>
            <person name="Kaneko T."/>
            <person name="Katoh T."/>
            <person name="Sato S."/>
            <person name="Nakamura Y."/>
            <person name="Asamizu E."/>
            <person name="Tabata S."/>
        </authorList>
    </citation>
    <scope>NUCLEOTIDE SEQUENCE [LARGE SCALE GENOMIC DNA]</scope>
    <source>
        <strain>cv. Columbia</strain>
    </source>
</reference>
<reference key="3">
    <citation type="journal article" date="2017" name="Plant J.">
        <title>Araport11: a complete reannotation of the Arabidopsis thaliana reference genome.</title>
        <authorList>
            <person name="Cheng C.Y."/>
            <person name="Krishnakumar V."/>
            <person name="Chan A.P."/>
            <person name="Thibaud-Nissen F."/>
            <person name="Schobel S."/>
            <person name="Town C.D."/>
        </authorList>
    </citation>
    <scope>GENOME REANNOTATION</scope>
    <source>
        <strain>cv. Columbia</strain>
    </source>
</reference>
<reference key="4">
    <citation type="journal article" date="2003" name="Science">
        <title>Empirical analysis of transcriptional activity in the Arabidopsis genome.</title>
        <authorList>
            <person name="Yamada K."/>
            <person name="Lim J."/>
            <person name="Dale J.M."/>
            <person name="Chen H."/>
            <person name="Shinn P."/>
            <person name="Palm C.J."/>
            <person name="Southwick A.M."/>
            <person name="Wu H.C."/>
            <person name="Kim C.J."/>
            <person name="Nguyen M."/>
            <person name="Pham P.K."/>
            <person name="Cheuk R.F."/>
            <person name="Karlin-Newmann G."/>
            <person name="Liu S.X."/>
            <person name="Lam B."/>
            <person name="Sakano H."/>
            <person name="Wu T."/>
            <person name="Yu G."/>
            <person name="Miranda M."/>
            <person name="Quach H.L."/>
            <person name="Tripp M."/>
            <person name="Chang C.H."/>
            <person name="Lee J.M."/>
            <person name="Toriumi M.J."/>
            <person name="Chan M.M."/>
            <person name="Tang C.C."/>
            <person name="Onodera C.S."/>
            <person name="Deng J.M."/>
            <person name="Akiyama K."/>
            <person name="Ansari Y."/>
            <person name="Arakawa T."/>
            <person name="Banh J."/>
            <person name="Banno F."/>
            <person name="Bowser L."/>
            <person name="Brooks S.Y."/>
            <person name="Carninci P."/>
            <person name="Chao Q."/>
            <person name="Choy N."/>
            <person name="Enju A."/>
            <person name="Goldsmith A.D."/>
            <person name="Gurjal M."/>
            <person name="Hansen N.F."/>
            <person name="Hayashizaki Y."/>
            <person name="Johnson-Hopson C."/>
            <person name="Hsuan V.W."/>
            <person name="Iida K."/>
            <person name="Karnes M."/>
            <person name="Khan S."/>
            <person name="Koesema E."/>
            <person name="Ishida J."/>
            <person name="Jiang P.X."/>
            <person name="Jones T."/>
            <person name="Kawai J."/>
            <person name="Kamiya A."/>
            <person name="Meyers C."/>
            <person name="Nakajima M."/>
            <person name="Narusaka M."/>
            <person name="Seki M."/>
            <person name="Sakurai T."/>
            <person name="Satou M."/>
            <person name="Tamse R."/>
            <person name="Vaysberg M."/>
            <person name="Wallender E.K."/>
            <person name="Wong C."/>
            <person name="Yamamura Y."/>
            <person name="Yuan S."/>
            <person name="Shinozaki K."/>
            <person name="Davis R.W."/>
            <person name="Theologis A."/>
            <person name="Ecker J.R."/>
        </authorList>
    </citation>
    <scope>NUCLEOTIDE SEQUENCE [LARGE SCALE MRNA]</scope>
    <source>
        <strain>cv. Columbia</strain>
    </source>
</reference>
<reference key="5">
    <citation type="journal article" date="2009" name="BMC Genomics">
        <title>Genome wide expression analysis of CBS domain containing proteins in Arabidopsis thaliana (L.) Heynh and Oryza sativa L. reveals their developmental and stress regulation.</title>
        <authorList>
            <person name="Kushwaha H.R."/>
            <person name="Singh A.K."/>
            <person name="Sopory S.K."/>
            <person name="Singla-Pareek S.L."/>
            <person name="Pareek A."/>
        </authorList>
    </citation>
    <scope>GENE FAMILY</scope>
    <scope>NOMENCLATURE</scope>
</reference>
<reference key="6">
    <citation type="journal article" date="2017" name="Plant Cell Environ.">
        <title>Overexpression of PP2A-C5 that encodes the catalytic subunit 5 of protein phosphatase 2A in Arabidopsis confers better root and shoot development under salt conditions.</title>
        <authorList>
            <person name="Hu R."/>
            <person name="Zhu Y."/>
            <person name="Wei J."/>
            <person name="Chen J."/>
            <person name="Shi H."/>
            <person name="Shen G."/>
            <person name="Zhang H."/>
        </authorList>
    </citation>
    <scope>INTERACTION WITH PP2A5</scope>
</reference>
<keyword id="KW-0129">CBS domain</keyword>
<keyword id="KW-0868">Chloride</keyword>
<keyword id="KW-0869">Chloride channel</keyword>
<keyword id="KW-0407">Ion channel</keyword>
<keyword id="KW-0406">Ion transport</keyword>
<keyword id="KW-0472">Membrane</keyword>
<keyword id="KW-1185">Reference proteome</keyword>
<keyword id="KW-0677">Repeat</keyword>
<keyword id="KW-0812">Transmembrane</keyword>
<keyword id="KW-1133">Transmembrane helix</keyword>
<keyword id="KW-0813">Transport</keyword>
<keyword id="KW-0851">Voltage-gated channel</keyword>
<protein>
    <recommendedName>
        <fullName>Chloride channel protein CLC-b</fullName>
        <shortName>AtCLC-b</shortName>
    </recommendedName>
    <alternativeName>
        <fullName>CBS domain-containing protein CBSCLC7</fullName>
    </alternativeName>
</protein>
<accession>P92942</accession>
<gene>
    <name type="primary">CLC-B</name>
    <name type="synonym">CBSCLC7</name>
    <name type="ordered locus">At3g27170</name>
    <name type="ORF">MYF5.4</name>
</gene>
<proteinExistence type="evidence at protein level"/>
<feature type="chain" id="PRO_0000094466" description="Chloride channel protein CLC-b">
    <location>
        <begin position="1"/>
        <end position="780"/>
    </location>
</feature>
<feature type="transmembrane region" description="Helical; Name=1" evidence="2">
    <location>
        <begin position="87"/>
        <end position="107"/>
    </location>
</feature>
<feature type="transmembrane region" description="Helical; Name=2" evidence="2">
    <location>
        <begin position="130"/>
        <end position="150"/>
    </location>
</feature>
<feature type="transmembrane region" description="Helical; Name=3" evidence="2">
    <location>
        <begin position="177"/>
        <end position="197"/>
    </location>
</feature>
<feature type="transmembrane region" description="Helical; Name=4" evidence="2">
    <location>
        <begin position="205"/>
        <end position="225"/>
    </location>
</feature>
<feature type="transmembrane region" description="Helical; Name=5" evidence="2">
    <location>
        <begin position="247"/>
        <end position="267"/>
    </location>
</feature>
<feature type="transmembrane region" description="Helical; Name=6" evidence="2">
    <location>
        <begin position="277"/>
        <end position="297"/>
    </location>
</feature>
<feature type="transmembrane region" description="Helical; Name=7" evidence="2">
    <location>
        <begin position="327"/>
        <end position="347"/>
    </location>
</feature>
<feature type="transmembrane region" description="Helical; Name=8" evidence="2">
    <location>
        <begin position="370"/>
        <end position="390"/>
    </location>
</feature>
<feature type="transmembrane region" description="Helical; Name=9" evidence="2">
    <location>
        <begin position="452"/>
        <end position="472"/>
    </location>
</feature>
<feature type="transmembrane region" description="Helical; Name=10" evidence="2">
    <location>
        <begin position="477"/>
        <end position="497"/>
    </location>
</feature>
<feature type="transmembrane region" description="Helical; Name=11" evidence="2">
    <location>
        <begin position="509"/>
        <end position="529"/>
    </location>
</feature>
<feature type="transmembrane region" description="Helical; Name=12" evidence="2">
    <location>
        <begin position="530"/>
        <end position="550"/>
    </location>
</feature>
<feature type="transmembrane region" description="Helical; Name=13" evidence="2">
    <location>
        <begin position="735"/>
        <end position="755"/>
    </location>
</feature>
<feature type="domain" description="CBS 1" evidence="3">
    <location>
        <begin position="594"/>
        <end position="663"/>
    </location>
</feature>
<feature type="domain" description="CBS 2" evidence="3">
    <location>
        <begin position="708"/>
        <end position="770"/>
    </location>
</feature>
<feature type="region of interest" description="Disordered" evidence="4">
    <location>
        <begin position="1"/>
        <end position="28"/>
    </location>
</feature>